<gene>
    <name evidence="1" type="primary">rpsN</name>
    <name type="ordered locus">VFMJ11_0238</name>
</gene>
<feature type="chain" id="PRO_1000128630" description="Small ribosomal subunit protein uS14">
    <location>
        <begin position="1"/>
        <end position="101"/>
    </location>
</feature>
<evidence type="ECO:0000255" key="1">
    <source>
        <dbReference type="HAMAP-Rule" id="MF_00537"/>
    </source>
</evidence>
<evidence type="ECO:0000305" key="2"/>
<dbReference type="EMBL" id="CP001139">
    <property type="protein sequence ID" value="ACH65106.1"/>
    <property type="molecule type" value="Genomic_DNA"/>
</dbReference>
<dbReference type="RefSeq" id="WP_005417246.1">
    <property type="nucleotide sequence ID" value="NC_011184.1"/>
</dbReference>
<dbReference type="SMR" id="B5FG22"/>
<dbReference type="KEGG" id="vfm:VFMJ11_0238"/>
<dbReference type="HOGENOM" id="CLU_139869_0_1_6"/>
<dbReference type="Proteomes" id="UP000001857">
    <property type="component" value="Chromosome I"/>
</dbReference>
<dbReference type="GO" id="GO:0005737">
    <property type="term" value="C:cytoplasm"/>
    <property type="evidence" value="ECO:0007669"/>
    <property type="project" value="UniProtKB-ARBA"/>
</dbReference>
<dbReference type="GO" id="GO:0015935">
    <property type="term" value="C:small ribosomal subunit"/>
    <property type="evidence" value="ECO:0007669"/>
    <property type="project" value="TreeGrafter"/>
</dbReference>
<dbReference type="GO" id="GO:0019843">
    <property type="term" value="F:rRNA binding"/>
    <property type="evidence" value="ECO:0007669"/>
    <property type="project" value="UniProtKB-UniRule"/>
</dbReference>
<dbReference type="GO" id="GO:0003735">
    <property type="term" value="F:structural constituent of ribosome"/>
    <property type="evidence" value="ECO:0007669"/>
    <property type="project" value="InterPro"/>
</dbReference>
<dbReference type="GO" id="GO:0006412">
    <property type="term" value="P:translation"/>
    <property type="evidence" value="ECO:0007669"/>
    <property type="project" value="UniProtKB-UniRule"/>
</dbReference>
<dbReference type="FunFam" id="1.10.287.1480:FF:000001">
    <property type="entry name" value="30S ribosomal protein S14"/>
    <property type="match status" value="1"/>
</dbReference>
<dbReference type="Gene3D" id="1.10.287.1480">
    <property type="match status" value="1"/>
</dbReference>
<dbReference type="HAMAP" id="MF_00537">
    <property type="entry name" value="Ribosomal_uS14_1"/>
    <property type="match status" value="1"/>
</dbReference>
<dbReference type="InterPro" id="IPR001209">
    <property type="entry name" value="Ribosomal_uS14"/>
</dbReference>
<dbReference type="InterPro" id="IPR023036">
    <property type="entry name" value="Ribosomal_uS14_bac/plastid"/>
</dbReference>
<dbReference type="InterPro" id="IPR018271">
    <property type="entry name" value="Ribosomal_uS14_CS"/>
</dbReference>
<dbReference type="NCBIfam" id="NF006477">
    <property type="entry name" value="PRK08881.1"/>
    <property type="match status" value="1"/>
</dbReference>
<dbReference type="PANTHER" id="PTHR19836">
    <property type="entry name" value="30S RIBOSOMAL PROTEIN S14"/>
    <property type="match status" value="1"/>
</dbReference>
<dbReference type="PANTHER" id="PTHR19836:SF19">
    <property type="entry name" value="SMALL RIBOSOMAL SUBUNIT PROTEIN US14M"/>
    <property type="match status" value="1"/>
</dbReference>
<dbReference type="Pfam" id="PF00253">
    <property type="entry name" value="Ribosomal_S14"/>
    <property type="match status" value="1"/>
</dbReference>
<dbReference type="SUPFAM" id="SSF57716">
    <property type="entry name" value="Glucocorticoid receptor-like (DNA-binding domain)"/>
    <property type="match status" value="1"/>
</dbReference>
<dbReference type="PROSITE" id="PS00527">
    <property type="entry name" value="RIBOSOMAL_S14"/>
    <property type="match status" value="1"/>
</dbReference>
<sequence length="101" mass="11480">MAKQSMKAREAKRAKLVAKFAEKRAALKVLISDVNASEEERWDAVLKLQALPRDSSASRQRNRCNQTGRPHGYLRKFGLSRIKVREACMKGEIPGLRKASW</sequence>
<comment type="function">
    <text evidence="1">Binds 16S rRNA, required for the assembly of 30S particles and may also be responsible for determining the conformation of the 16S rRNA at the A site.</text>
</comment>
<comment type="subunit">
    <text evidence="1">Part of the 30S ribosomal subunit. Contacts proteins S3 and S10.</text>
</comment>
<comment type="similarity">
    <text evidence="1">Belongs to the universal ribosomal protein uS14 family.</text>
</comment>
<keyword id="KW-0687">Ribonucleoprotein</keyword>
<keyword id="KW-0689">Ribosomal protein</keyword>
<keyword id="KW-0694">RNA-binding</keyword>
<keyword id="KW-0699">rRNA-binding</keyword>
<organism>
    <name type="scientific">Aliivibrio fischeri (strain MJ11)</name>
    <name type="common">Vibrio fischeri</name>
    <dbReference type="NCBI Taxonomy" id="388396"/>
    <lineage>
        <taxon>Bacteria</taxon>
        <taxon>Pseudomonadati</taxon>
        <taxon>Pseudomonadota</taxon>
        <taxon>Gammaproteobacteria</taxon>
        <taxon>Vibrionales</taxon>
        <taxon>Vibrionaceae</taxon>
        <taxon>Aliivibrio</taxon>
    </lineage>
</organism>
<name>RS14_ALIFM</name>
<proteinExistence type="inferred from homology"/>
<protein>
    <recommendedName>
        <fullName evidence="1">Small ribosomal subunit protein uS14</fullName>
    </recommendedName>
    <alternativeName>
        <fullName evidence="2">30S ribosomal protein S14</fullName>
    </alternativeName>
</protein>
<reference key="1">
    <citation type="submission" date="2008-08" db="EMBL/GenBank/DDBJ databases">
        <title>Complete sequence of Vibrio fischeri strain MJ11.</title>
        <authorList>
            <person name="Mandel M.J."/>
            <person name="Stabb E.V."/>
            <person name="Ruby E.G."/>
            <person name="Ferriera S."/>
            <person name="Johnson J."/>
            <person name="Kravitz S."/>
            <person name="Beeson K."/>
            <person name="Sutton G."/>
            <person name="Rogers Y.-H."/>
            <person name="Friedman R."/>
            <person name="Frazier M."/>
            <person name="Venter J.C."/>
        </authorList>
    </citation>
    <scope>NUCLEOTIDE SEQUENCE [LARGE SCALE GENOMIC DNA]</scope>
    <source>
        <strain>MJ11</strain>
    </source>
</reference>
<accession>B5FG22</accession>